<proteinExistence type="inferred from homology"/>
<comment type="function">
    <text evidence="1">Single strand-specific metallo-endoribonuclease involved in late-stage 70S ribosome quality control and in maturation of the 3' terminus of the 16S rRNA.</text>
</comment>
<comment type="cofactor">
    <cofactor evidence="1">
        <name>Zn(2+)</name>
        <dbReference type="ChEBI" id="CHEBI:29105"/>
    </cofactor>
    <text evidence="1">Binds 1 zinc ion.</text>
</comment>
<comment type="subcellular location">
    <subcellularLocation>
        <location evidence="1">Cytoplasm</location>
    </subcellularLocation>
</comment>
<comment type="similarity">
    <text evidence="1">Belongs to the endoribonuclease YbeY family.</text>
</comment>
<feature type="chain" id="PRO_1000073898" description="Endoribonuclease YbeY">
    <location>
        <begin position="1"/>
        <end position="167"/>
    </location>
</feature>
<feature type="binding site" evidence="1">
    <location>
        <position position="132"/>
    </location>
    <ligand>
        <name>Zn(2+)</name>
        <dbReference type="ChEBI" id="CHEBI:29105"/>
        <note>catalytic</note>
    </ligand>
</feature>
<feature type="binding site" evidence="1">
    <location>
        <position position="136"/>
    </location>
    <ligand>
        <name>Zn(2+)</name>
        <dbReference type="ChEBI" id="CHEBI:29105"/>
        <note>catalytic</note>
    </ligand>
</feature>
<feature type="binding site" evidence="1">
    <location>
        <position position="142"/>
    </location>
    <ligand>
        <name>Zn(2+)</name>
        <dbReference type="ChEBI" id="CHEBI:29105"/>
        <note>catalytic</note>
    </ligand>
</feature>
<evidence type="ECO:0000255" key="1">
    <source>
        <dbReference type="HAMAP-Rule" id="MF_00009"/>
    </source>
</evidence>
<dbReference type="EC" id="3.1.-.-" evidence="1"/>
<dbReference type="EMBL" id="CP000721">
    <property type="protein sequence ID" value="ABR33027.1"/>
    <property type="molecule type" value="Genomic_DNA"/>
</dbReference>
<dbReference type="RefSeq" id="WP_011968186.1">
    <property type="nucleotide sequence ID" value="NC_009617.1"/>
</dbReference>
<dbReference type="SMR" id="A6LRP7"/>
<dbReference type="GeneID" id="66343784"/>
<dbReference type="KEGG" id="cbe:Cbei_0843"/>
<dbReference type="eggNOG" id="COG0319">
    <property type="taxonomic scope" value="Bacteria"/>
</dbReference>
<dbReference type="HOGENOM" id="CLU_106710_3_0_9"/>
<dbReference type="Proteomes" id="UP000000565">
    <property type="component" value="Chromosome"/>
</dbReference>
<dbReference type="GO" id="GO:0005737">
    <property type="term" value="C:cytoplasm"/>
    <property type="evidence" value="ECO:0007669"/>
    <property type="project" value="UniProtKB-SubCell"/>
</dbReference>
<dbReference type="GO" id="GO:0004222">
    <property type="term" value="F:metalloendopeptidase activity"/>
    <property type="evidence" value="ECO:0007669"/>
    <property type="project" value="InterPro"/>
</dbReference>
<dbReference type="GO" id="GO:0004521">
    <property type="term" value="F:RNA endonuclease activity"/>
    <property type="evidence" value="ECO:0007669"/>
    <property type="project" value="UniProtKB-UniRule"/>
</dbReference>
<dbReference type="GO" id="GO:0008270">
    <property type="term" value="F:zinc ion binding"/>
    <property type="evidence" value="ECO:0007669"/>
    <property type="project" value="UniProtKB-UniRule"/>
</dbReference>
<dbReference type="GO" id="GO:0006364">
    <property type="term" value="P:rRNA processing"/>
    <property type="evidence" value="ECO:0007669"/>
    <property type="project" value="UniProtKB-UniRule"/>
</dbReference>
<dbReference type="Gene3D" id="3.40.390.30">
    <property type="entry name" value="Metalloproteases ('zincins'), catalytic domain"/>
    <property type="match status" value="1"/>
</dbReference>
<dbReference type="HAMAP" id="MF_00009">
    <property type="entry name" value="Endoribonucl_YbeY"/>
    <property type="match status" value="1"/>
</dbReference>
<dbReference type="InterPro" id="IPR023091">
    <property type="entry name" value="MetalPrtase_cat_dom_sf_prd"/>
</dbReference>
<dbReference type="InterPro" id="IPR002036">
    <property type="entry name" value="YbeY"/>
</dbReference>
<dbReference type="InterPro" id="IPR020549">
    <property type="entry name" value="YbeY_CS"/>
</dbReference>
<dbReference type="NCBIfam" id="TIGR00043">
    <property type="entry name" value="rRNA maturation RNase YbeY"/>
    <property type="match status" value="1"/>
</dbReference>
<dbReference type="PANTHER" id="PTHR46986">
    <property type="entry name" value="ENDORIBONUCLEASE YBEY, CHLOROPLASTIC"/>
    <property type="match status" value="1"/>
</dbReference>
<dbReference type="PANTHER" id="PTHR46986:SF1">
    <property type="entry name" value="ENDORIBONUCLEASE YBEY, CHLOROPLASTIC"/>
    <property type="match status" value="1"/>
</dbReference>
<dbReference type="Pfam" id="PF02130">
    <property type="entry name" value="YbeY"/>
    <property type="match status" value="1"/>
</dbReference>
<dbReference type="SUPFAM" id="SSF55486">
    <property type="entry name" value="Metalloproteases ('zincins'), catalytic domain"/>
    <property type="match status" value="1"/>
</dbReference>
<dbReference type="PROSITE" id="PS01306">
    <property type="entry name" value="UPF0054"/>
    <property type="match status" value="1"/>
</dbReference>
<keyword id="KW-0963">Cytoplasm</keyword>
<keyword id="KW-0255">Endonuclease</keyword>
<keyword id="KW-0378">Hydrolase</keyword>
<keyword id="KW-0479">Metal-binding</keyword>
<keyword id="KW-0540">Nuclease</keyword>
<keyword id="KW-0690">Ribosome biogenesis</keyword>
<keyword id="KW-0698">rRNA processing</keyword>
<keyword id="KW-0862">Zinc</keyword>
<organism>
    <name type="scientific">Clostridium beijerinckii (strain ATCC 51743 / NCIMB 8052)</name>
    <name type="common">Clostridium acetobutylicum</name>
    <dbReference type="NCBI Taxonomy" id="290402"/>
    <lineage>
        <taxon>Bacteria</taxon>
        <taxon>Bacillati</taxon>
        <taxon>Bacillota</taxon>
        <taxon>Clostridia</taxon>
        <taxon>Eubacteriales</taxon>
        <taxon>Clostridiaceae</taxon>
        <taxon>Clostridium</taxon>
    </lineage>
</organism>
<accession>A6LRP7</accession>
<protein>
    <recommendedName>
        <fullName evidence="1">Endoribonuclease YbeY</fullName>
        <ecNumber evidence="1">3.1.-.-</ecNumber>
    </recommendedName>
</protein>
<gene>
    <name evidence="1" type="primary">ybeY</name>
    <name type="ordered locus">Cbei_0843</name>
</gene>
<sequence>MIYVDNRQNKVEASEKLIERLTEVIEFALKEEEVNMKCEISLLFVDNNEIKEINNETRGINRETDVLSFPMLEYEDKKVFKDMYKDYKFSQSDFDGDELVLGDIVLSLEKALEQSKEFNHSYEREASYLVVHSVLHLLGYDHMEDDDKIIMRSREEDILNKLNIIRG</sequence>
<reference key="1">
    <citation type="submission" date="2007-06" db="EMBL/GenBank/DDBJ databases">
        <title>Complete sequence of Clostridium beijerinckii NCIMB 8052.</title>
        <authorList>
            <consortium name="US DOE Joint Genome Institute"/>
            <person name="Copeland A."/>
            <person name="Lucas S."/>
            <person name="Lapidus A."/>
            <person name="Barry K."/>
            <person name="Detter J.C."/>
            <person name="Glavina del Rio T."/>
            <person name="Hammon N."/>
            <person name="Israni S."/>
            <person name="Dalin E."/>
            <person name="Tice H."/>
            <person name="Pitluck S."/>
            <person name="Sims D."/>
            <person name="Brettin T."/>
            <person name="Bruce D."/>
            <person name="Tapia R."/>
            <person name="Brainard J."/>
            <person name="Schmutz J."/>
            <person name="Larimer F."/>
            <person name="Land M."/>
            <person name="Hauser L."/>
            <person name="Kyrpides N."/>
            <person name="Mikhailova N."/>
            <person name="Bennet G."/>
            <person name="Cann I."/>
            <person name="Chen J.-S."/>
            <person name="Contreras A.L."/>
            <person name="Jones D."/>
            <person name="Kashket E."/>
            <person name="Mitchell W."/>
            <person name="Stoddard S."/>
            <person name="Schwarz W."/>
            <person name="Qureshi N."/>
            <person name="Young M."/>
            <person name="Shi Z."/>
            <person name="Ezeji T."/>
            <person name="White B."/>
            <person name="Blaschek H."/>
            <person name="Richardson P."/>
        </authorList>
    </citation>
    <scope>NUCLEOTIDE SEQUENCE [LARGE SCALE GENOMIC DNA]</scope>
    <source>
        <strain>ATCC 51743 / NCIMB 8052</strain>
    </source>
</reference>
<name>YBEY_CLOB8</name>